<proteinExistence type="evidence at protein level"/>
<comment type="function">
    <text evidence="1">Catalyzes the conversion of GlcNAc-6-P into GlcNAc-1-P during the synthesis of uridine diphosphate/UDP-GlcNAc, which is a biosynthetic precursor of chitin and also supplies the amino sugars for N-linked oligosaccharides of glycoproteins.</text>
</comment>
<comment type="catalytic activity">
    <reaction evidence="1">
        <text>N-acetyl-alpha-D-glucosamine 1-phosphate = N-acetyl-D-glucosamine 6-phosphate</text>
        <dbReference type="Rhea" id="RHEA:23804"/>
        <dbReference type="ChEBI" id="CHEBI:57513"/>
        <dbReference type="ChEBI" id="CHEBI:57776"/>
        <dbReference type="EC" id="5.4.2.3"/>
    </reaction>
</comment>
<comment type="cofactor">
    <cofactor evidence="2">
        <name>Mg(2+)</name>
        <dbReference type="ChEBI" id="CHEBI:18420"/>
    </cofactor>
    <text evidence="2">Binds 1 Mg(2+) ion per subunit.</text>
</comment>
<comment type="pathway">
    <text evidence="1">Nucleotide-sugar biosynthesis; UDP-N-acetyl-alpha-D-glucosamine biosynthesis; N-acetyl-alpha-D-glucosamine 1-phosphate from alpha-D-glucosamine 6-phosphate (route I): step 2/2.</text>
</comment>
<comment type="subcellular location">
    <subcellularLocation>
        <location evidence="3">Cytoplasm</location>
    </subcellularLocation>
    <subcellularLocation>
        <location evidence="3">Nucleus</location>
    </subcellularLocation>
</comment>
<comment type="similarity">
    <text evidence="5">Belongs to the phosphohexose mutase family.</text>
</comment>
<name>AGM2_SCHPO</name>
<accession>Q09770</accession>
<accession>O94610</accession>
<reference key="1">
    <citation type="journal article" date="2002" name="Nature">
        <title>The genome sequence of Schizosaccharomyces pombe.</title>
        <authorList>
            <person name="Wood V."/>
            <person name="Gwilliam R."/>
            <person name="Rajandream M.A."/>
            <person name="Lyne M.H."/>
            <person name="Lyne R."/>
            <person name="Stewart A."/>
            <person name="Sgouros J.G."/>
            <person name="Peat N."/>
            <person name="Hayles J."/>
            <person name="Baker S.G."/>
            <person name="Basham D."/>
            <person name="Bowman S."/>
            <person name="Brooks K."/>
            <person name="Brown D."/>
            <person name="Brown S."/>
            <person name="Chillingworth T."/>
            <person name="Churcher C.M."/>
            <person name="Collins M."/>
            <person name="Connor R."/>
            <person name="Cronin A."/>
            <person name="Davis P."/>
            <person name="Feltwell T."/>
            <person name="Fraser A."/>
            <person name="Gentles S."/>
            <person name="Goble A."/>
            <person name="Hamlin N."/>
            <person name="Harris D.E."/>
            <person name="Hidalgo J."/>
            <person name="Hodgson G."/>
            <person name="Holroyd S."/>
            <person name="Hornsby T."/>
            <person name="Howarth S."/>
            <person name="Huckle E.J."/>
            <person name="Hunt S."/>
            <person name="Jagels K."/>
            <person name="James K.D."/>
            <person name="Jones L."/>
            <person name="Jones M."/>
            <person name="Leather S."/>
            <person name="McDonald S."/>
            <person name="McLean J."/>
            <person name="Mooney P."/>
            <person name="Moule S."/>
            <person name="Mungall K.L."/>
            <person name="Murphy L.D."/>
            <person name="Niblett D."/>
            <person name="Odell C."/>
            <person name="Oliver K."/>
            <person name="O'Neil S."/>
            <person name="Pearson D."/>
            <person name="Quail M.A."/>
            <person name="Rabbinowitsch E."/>
            <person name="Rutherford K.M."/>
            <person name="Rutter S."/>
            <person name="Saunders D."/>
            <person name="Seeger K."/>
            <person name="Sharp S."/>
            <person name="Skelton J."/>
            <person name="Simmonds M.N."/>
            <person name="Squares R."/>
            <person name="Squares S."/>
            <person name="Stevens K."/>
            <person name="Taylor K."/>
            <person name="Taylor R.G."/>
            <person name="Tivey A."/>
            <person name="Walsh S.V."/>
            <person name="Warren T."/>
            <person name="Whitehead S."/>
            <person name="Woodward J.R."/>
            <person name="Volckaert G."/>
            <person name="Aert R."/>
            <person name="Robben J."/>
            <person name="Grymonprez B."/>
            <person name="Weltjens I."/>
            <person name="Vanstreels E."/>
            <person name="Rieger M."/>
            <person name="Schaefer M."/>
            <person name="Mueller-Auer S."/>
            <person name="Gabel C."/>
            <person name="Fuchs M."/>
            <person name="Duesterhoeft A."/>
            <person name="Fritzc C."/>
            <person name="Holzer E."/>
            <person name="Moestl D."/>
            <person name="Hilbert H."/>
            <person name="Borzym K."/>
            <person name="Langer I."/>
            <person name="Beck A."/>
            <person name="Lehrach H."/>
            <person name="Reinhardt R."/>
            <person name="Pohl T.M."/>
            <person name="Eger P."/>
            <person name="Zimmermann W."/>
            <person name="Wedler H."/>
            <person name="Wambutt R."/>
            <person name="Purnelle B."/>
            <person name="Goffeau A."/>
            <person name="Cadieu E."/>
            <person name="Dreano S."/>
            <person name="Gloux S."/>
            <person name="Lelaure V."/>
            <person name="Mottier S."/>
            <person name="Galibert F."/>
            <person name="Aves S.J."/>
            <person name="Xiang Z."/>
            <person name="Hunt C."/>
            <person name="Moore K."/>
            <person name="Hurst S.M."/>
            <person name="Lucas M."/>
            <person name="Rochet M."/>
            <person name="Gaillardin C."/>
            <person name="Tallada V.A."/>
            <person name="Garzon A."/>
            <person name="Thode G."/>
            <person name="Daga R.R."/>
            <person name="Cruzado L."/>
            <person name="Jimenez J."/>
            <person name="Sanchez M."/>
            <person name="del Rey F."/>
            <person name="Benito J."/>
            <person name="Dominguez A."/>
            <person name="Revuelta J.L."/>
            <person name="Moreno S."/>
            <person name="Armstrong J."/>
            <person name="Forsburg S.L."/>
            <person name="Cerutti L."/>
            <person name="Lowe T."/>
            <person name="McCombie W.R."/>
            <person name="Paulsen I."/>
            <person name="Potashkin J."/>
            <person name="Shpakovski G.V."/>
            <person name="Ussery D."/>
            <person name="Barrell B.G."/>
            <person name="Nurse P."/>
        </authorList>
    </citation>
    <scope>NUCLEOTIDE SEQUENCE [LARGE SCALE GENOMIC DNA]</scope>
    <source>
        <strain>972 / ATCC 24843</strain>
    </source>
</reference>
<reference key="2">
    <citation type="journal article" date="2006" name="Nat. Biotechnol.">
        <title>ORFeome cloning and global analysis of protein localization in the fission yeast Schizosaccharomyces pombe.</title>
        <authorList>
            <person name="Matsuyama A."/>
            <person name="Arai R."/>
            <person name="Yashiroda Y."/>
            <person name="Shirai A."/>
            <person name="Kamata A."/>
            <person name="Sekido S."/>
            <person name="Kobayashi Y."/>
            <person name="Hashimoto A."/>
            <person name="Hamamoto M."/>
            <person name="Hiraoka Y."/>
            <person name="Horinouchi S."/>
            <person name="Yoshida M."/>
        </authorList>
    </citation>
    <scope>SUBCELLULAR LOCATION [LARGE SCALE ANALYSIS]</scope>
</reference>
<reference key="3">
    <citation type="journal article" date="2008" name="J. Proteome Res.">
        <title>Phosphoproteome analysis of fission yeast.</title>
        <authorList>
            <person name="Wilson-Grady J.T."/>
            <person name="Villen J."/>
            <person name="Gygi S.P."/>
        </authorList>
    </citation>
    <scope>PHOSPHORYLATION [LARGE SCALE ANALYSIS] AT SER-77 AND SER-82</scope>
    <scope>IDENTIFICATION BY MASS SPECTROMETRY</scope>
</reference>
<dbReference type="EC" id="5.4.2.3" evidence="1"/>
<dbReference type="EMBL" id="CU329670">
    <property type="protein sequence ID" value="CAA91066.2"/>
    <property type="molecule type" value="Genomic_DNA"/>
</dbReference>
<dbReference type="PIR" id="T37562">
    <property type="entry name" value="T37562"/>
</dbReference>
<dbReference type="PIR" id="T38190">
    <property type="entry name" value="S62416"/>
</dbReference>
<dbReference type="RefSeq" id="NP_593040.2">
    <property type="nucleotide sequence ID" value="NM_001018439.3"/>
</dbReference>
<dbReference type="SMR" id="Q09770"/>
<dbReference type="BioGRID" id="280512">
    <property type="interactions" value="30"/>
</dbReference>
<dbReference type="FunCoup" id="Q09770">
    <property type="interactions" value="112"/>
</dbReference>
<dbReference type="STRING" id="284812.Q09770"/>
<dbReference type="iPTMnet" id="Q09770"/>
<dbReference type="PaxDb" id="4896-SPAC1296.01c.1"/>
<dbReference type="EnsemblFungi" id="SPAC1296.01c.1">
    <property type="protein sequence ID" value="SPAC1296.01c.1:pep"/>
    <property type="gene ID" value="SPAC1296.01c"/>
</dbReference>
<dbReference type="PomBase" id="SPAC1296.01c"/>
<dbReference type="VEuPathDB" id="FungiDB:SPAC1296.01c"/>
<dbReference type="eggNOG" id="KOG2537">
    <property type="taxonomic scope" value="Eukaryota"/>
</dbReference>
<dbReference type="HOGENOM" id="CLU_022890_1_0_1"/>
<dbReference type="InParanoid" id="Q09770"/>
<dbReference type="OMA" id="VLDDGCC"/>
<dbReference type="PhylomeDB" id="Q09770"/>
<dbReference type="UniPathway" id="UPA00113">
    <property type="reaction ID" value="UER00530"/>
</dbReference>
<dbReference type="PRO" id="PR:Q09770"/>
<dbReference type="Proteomes" id="UP000002485">
    <property type="component" value="Chromosome I"/>
</dbReference>
<dbReference type="GO" id="GO:0005829">
    <property type="term" value="C:cytosol"/>
    <property type="evidence" value="ECO:0007005"/>
    <property type="project" value="PomBase"/>
</dbReference>
<dbReference type="GO" id="GO:0005634">
    <property type="term" value="C:nucleus"/>
    <property type="evidence" value="ECO:0007005"/>
    <property type="project" value="PomBase"/>
</dbReference>
<dbReference type="GO" id="GO:0046872">
    <property type="term" value="F:metal ion binding"/>
    <property type="evidence" value="ECO:0007669"/>
    <property type="project" value="UniProtKB-KW"/>
</dbReference>
<dbReference type="GO" id="GO:0004610">
    <property type="term" value="F:phosphoacetylglucosamine mutase activity"/>
    <property type="evidence" value="ECO:0000318"/>
    <property type="project" value="GO_Central"/>
</dbReference>
<dbReference type="GO" id="GO:0005975">
    <property type="term" value="P:carbohydrate metabolic process"/>
    <property type="evidence" value="ECO:0007669"/>
    <property type="project" value="InterPro"/>
</dbReference>
<dbReference type="GO" id="GO:0071555">
    <property type="term" value="P:cell wall organization"/>
    <property type="evidence" value="ECO:0007669"/>
    <property type="project" value="UniProtKB-KW"/>
</dbReference>
<dbReference type="GO" id="GO:0006031">
    <property type="term" value="P:chitin biosynthetic process"/>
    <property type="evidence" value="ECO:0000318"/>
    <property type="project" value="GO_Central"/>
</dbReference>
<dbReference type="GO" id="GO:0006048">
    <property type="term" value="P:UDP-N-acetylglucosamine biosynthetic process"/>
    <property type="evidence" value="ECO:0000318"/>
    <property type="project" value="GO_Central"/>
</dbReference>
<dbReference type="CDD" id="cd03086">
    <property type="entry name" value="PGM3"/>
    <property type="match status" value="1"/>
</dbReference>
<dbReference type="FunFam" id="3.30.310.50:FF:000003">
    <property type="entry name" value="Phosphoacetylglucosamine mutase"/>
    <property type="match status" value="1"/>
</dbReference>
<dbReference type="FunFam" id="3.40.120.10:FF:000013">
    <property type="entry name" value="Phosphoacetylglucosamine mutase"/>
    <property type="match status" value="1"/>
</dbReference>
<dbReference type="FunFam" id="3.40.120.10:FF:000023">
    <property type="entry name" value="Phosphoacetylglucosamine mutase"/>
    <property type="match status" value="1"/>
</dbReference>
<dbReference type="Gene3D" id="3.40.120.10">
    <property type="entry name" value="Alpha-D-Glucose-1,6-Bisphosphate, subunit A, domain 3"/>
    <property type="match status" value="2"/>
</dbReference>
<dbReference type="Gene3D" id="3.30.310.50">
    <property type="entry name" value="Alpha-D-phosphohexomutase, C-terminal domain"/>
    <property type="match status" value="1"/>
</dbReference>
<dbReference type="InterPro" id="IPR005844">
    <property type="entry name" value="A-D-PHexomutase_a/b/a-I"/>
</dbReference>
<dbReference type="InterPro" id="IPR016055">
    <property type="entry name" value="A-D-PHexomutase_a/b/a-I/II/III"/>
</dbReference>
<dbReference type="InterPro" id="IPR005843">
    <property type="entry name" value="A-D-PHexomutase_C"/>
</dbReference>
<dbReference type="InterPro" id="IPR036900">
    <property type="entry name" value="A-D-PHexomutase_C_sf"/>
</dbReference>
<dbReference type="InterPro" id="IPR049023">
    <property type="entry name" value="AMG1_II"/>
</dbReference>
<dbReference type="InterPro" id="IPR049022">
    <property type="entry name" value="AMG1_III"/>
</dbReference>
<dbReference type="InterPro" id="IPR016657">
    <property type="entry name" value="PAGM"/>
</dbReference>
<dbReference type="PANTHER" id="PTHR45955">
    <property type="entry name" value="PHOSPHOACETYLGLUCOSAMINE MUTASE"/>
    <property type="match status" value="1"/>
</dbReference>
<dbReference type="PANTHER" id="PTHR45955:SF3">
    <property type="entry name" value="PHOSPHOACETYLGLUCOSAMINE MUTASE 2"/>
    <property type="match status" value="1"/>
</dbReference>
<dbReference type="Pfam" id="PF21405">
    <property type="entry name" value="AMG1_II"/>
    <property type="match status" value="1"/>
</dbReference>
<dbReference type="Pfam" id="PF21404">
    <property type="entry name" value="AMG1_III"/>
    <property type="match status" value="1"/>
</dbReference>
<dbReference type="Pfam" id="PF02878">
    <property type="entry name" value="PGM_PMM_I"/>
    <property type="match status" value="1"/>
</dbReference>
<dbReference type="Pfam" id="PF00408">
    <property type="entry name" value="PGM_PMM_IV"/>
    <property type="match status" value="1"/>
</dbReference>
<dbReference type="PIRSF" id="PIRSF016408">
    <property type="entry name" value="PAGM"/>
    <property type="match status" value="1"/>
</dbReference>
<dbReference type="SUPFAM" id="SSF55957">
    <property type="entry name" value="Phosphoglucomutase, C-terminal domain"/>
    <property type="match status" value="1"/>
</dbReference>
<dbReference type="SUPFAM" id="SSF53738">
    <property type="entry name" value="Phosphoglucomutase, first 3 domains"/>
    <property type="match status" value="3"/>
</dbReference>
<organism>
    <name type="scientific">Schizosaccharomyces pombe (strain 972 / ATCC 24843)</name>
    <name type="common">Fission yeast</name>
    <dbReference type="NCBI Taxonomy" id="284812"/>
    <lineage>
        <taxon>Eukaryota</taxon>
        <taxon>Fungi</taxon>
        <taxon>Dikarya</taxon>
        <taxon>Ascomycota</taxon>
        <taxon>Taphrinomycotina</taxon>
        <taxon>Schizosaccharomycetes</taxon>
        <taxon>Schizosaccharomycetales</taxon>
        <taxon>Schizosaccharomycetaceae</taxon>
        <taxon>Schizosaccharomyces</taxon>
    </lineage>
</organism>
<feature type="chain" id="PRO_0000148018" description="Phosphoacetylglucosamine mutase 2">
    <location>
        <begin position="1"/>
        <end position="542"/>
    </location>
</feature>
<feature type="active site" description="Phosphoserine intermediate" evidence="2">
    <location>
        <position position="77"/>
    </location>
</feature>
<feature type="binding site" description="via phosphate group" evidence="2">
    <location>
        <position position="77"/>
    </location>
    <ligand>
        <name>Mg(2+)</name>
        <dbReference type="ChEBI" id="CHEBI:18420"/>
    </ligand>
</feature>
<feature type="binding site" evidence="2">
    <location>
        <position position="292"/>
    </location>
    <ligand>
        <name>Mg(2+)</name>
        <dbReference type="ChEBI" id="CHEBI:18420"/>
    </ligand>
</feature>
<feature type="binding site" evidence="2">
    <location>
        <position position="294"/>
    </location>
    <ligand>
        <name>Mg(2+)</name>
        <dbReference type="ChEBI" id="CHEBI:18420"/>
    </ligand>
</feature>
<feature type="binding site" evidence="2">
    <location>
        <position position="296"/>
    </location>
    <ligand>
        <name>Mg(2+)</name>
        <dbReference type="ChEBI" id="CHEBI:18420"/>
    </ligand>
</feature>
<feature type="binding site" evidence="2">
    <location>
        <begin position="385"/>
        <end position="387"/>
    </location>
    <ligand>
        <name>substrate</name>
    </ligand>
</feature>
<feature type="binding site" evidence="2">
    <location>
        <begin position="510"/>
        <end position="514"/>
    </location>
    <ligand>
        <name>substrate</name>
    </ligand>
</feature>
<feature type="binding site" evidence="2">
    <location>
        <position position="519"/>
    </location>
    <ligand>
        <name>substrate</name>
    </ligand>
</feature>
<feature type="modified residue" description="Phosphoserine" evidence="4">
    <location>
        <position position="77"/>
    </location>
</feature>
<feature type="modified residue" description="Phosphoserine" evidence="4">
    <location>
        <position position="82"/>
    </location>
</feature>
<evidence type="ECO:0000250" key="1">
    <source>
        <dbReference type="UniProtKB" id="P38628"/>
    </source>
</evidence>
<evidence type="ECO:0000250" key="2">
    <source>
        <dbReference type="UniProtKB" id="Q9P4V2"/>
    </source>
</evidence>
<evidence type="ECO:0000269" key="3">
    <source>
    </source>
</evidence>
<evidence type="ECO:0000269" key="4">
    <source>
    </source>
</evidence>
<evidence type="ECO:0000305" key="5"/>
<evidence type="ECO:0000312" key="6">
    <source>
        <dbReference type="PomBase" id="SPAC1296.01c"/>
    </source>
</evidence>
<gene>
    <name evidence="6" type="ORF">SPAC1296.01c</name>
    <name type="ORF">SPAC22F3.01</name>
</gene>
<sequence>MSDAEDSDSIVNEFVTAIVRESDKFAKVHSYPMQYGTGGYRADAELLSSVAFRTGVIASFLSAKLHGQPVGLMVTASHNASSENGLKIVNILSSLDSSKWEAYLDQVVNADSADELTVCLTSILKKAKIIPGSEARVFVGYDSRSTSEILAQAVIDGIVVCKAKYENFGLLTTPQLHYMVKASQTYGTPDAIGEPTERGYFEKLSKAYQSLMTGKKIKGTVLIDAANGVGAAKIKELAKYIDPKLFPIEIVNDNIDNPELLNNSCGADFVRTQQKPPNGISAPKHARCASFDGDADRIVYFAFGSHSFHLLDGDKICALFAQFLIDLIRSTGLDLQVGIVQTAYANGASTAFFQKTLKVPVLCVSPGLKHLYHAAQAYDVGVFFEANGHGTILVSHAALSKIISHEVLSPAQFNALKTLKTVFELINQTDGDAITNLLLVEVILAHKNCTLKEWNQLYSEIPSRLIRCEVEDRSIYTTTDAEQKLVTPEGLQEKIDALVAKYTGGRAFVRSSGTEDAVRVYAEASSRGESEDLALRIVELLH</sequence>
<keyword id="KW-0119">Carbohydrate metabolism</keyword>
<keyword id="KW-0961">Cell wall biogenesis/degradation</keyword>
<keyword id="KW-0963">Cytoplasm</keyword>
<keyword id="KW-0413">Isomerase</keyword>
<keyword id="KW-0460">Magnesium</keyword>
<keyword id="KW-0479">Metal-binding</keyword>
<keyword id="KW-0539">Nucleus</keyword>
<keyword id="KW-0597">Phosphoprotein</keyword>
<keyword id="KW-1185">Reference proteome</keyword>
<protein>
    <recommendedName>
        <fullName evidence="1">Phosphoacetylglucosamine mutase 2</fullName>
        <shortName>PAGM</shortName>
        <ecNumber evidence="1">5.4.2.3</ecNumber>
    </recommendedName>
    <alternativeName>
        <fullName evidence="1">Acetylglucosamine phosphomutase</fullName>
    </alternativeName>
    <alternativeName>
        <fullName evidence="1">N-acetylglucosamine-phosphate mutase</fullName>
    </alternativeName>
</protein>